<organism>
    <name type="scientific">Xanthobacter autotrophicus (strain ATCC BAA-1158 / Py2)</name>
    <dbReference type="NCBI Taxonomy" id="78245"/>
    <lineage>
        <taxon>Bacteria</taxon>
        <taxon>Pseudomonadati</taxon>
        <taxon>Pseudomonadota</taxon>
        <taxon>Alphaproteobacteria</taxon>
        <taxon>Hyphomicrobiales</taxon>
        <taxon>Xanthobacteraceae</taxon>
        <taxon>Xanthobacter</taxon>
    </lineage>
</organism>
<protein>
    <recommendedName>
        <fullName evidence="1">Tyrosine--tRNA ligase</fullName>
        <ecNumber evidence="1">6.1.1.1</ecNumber>
    </recommendedName>
    <alternativeName>
        <fullName evidence="1">Tyrosyl-tRNA synthetase</fullName>
        <shortName evidence="1">TyrRS</shortName>
    </alternativeName>
</protein>
<gene>
    <name evidence="1" type="primary">tyrS</name>
    <name type="ordered locus">Xaut_4474</name>
</gene>
<accession>A7INU9</accession>
<feature type="chain" id="PRO_1000189348" description="Tyrosine--tRNA ligase">
    <location>
        <begin position="1"/>
        <end position="416"/>
    </location>
</feature>
<feature type="domain" description="S4 RNA-binding" evidence="1">
    <location>
        <begin position="349"/>
        <end position="416"/>
    </location>
</feature>
<feature type="short sequence motif" description="'HIGH' region">
    <location>
        <begin position="46"/>
        <end position="55"/>
    </location>
</feature>
<feature type="short sequence motif" description="'KMSKS' region">
    <location>
        <begin position="235"/>
        <end position="239"/>
    </location>
</feature>
<feature type="binding site" evidence="1">
    <location>
        <position position="41"/>
    </location>
    <ligand>
        <name>L-tyrosine</name>
        <dbReference type="ChEBI" id="CHEBI:58315"/>
    </ligand>
</feature>
<feature type="binding site" evidence="1">
    <location>
        <position position="175"/>
    </location>
    <ligand>
        <name>L-tyrosine</name>
        <dbReference type="ChEBI" id="CHEBI:58315"/>
    </ligand>
</feature>
<feature type="binding site" evidence="1">
    <location>
        <position position="179"/>
    </location>
    <ligand>
        <name>L-tyrosine</name>
        <dbReference type="ChEBI" id="CHEBI:58315"/>
    </ligand>
</feature>
<feature type="binding site" evidence="1">
    <location>
        <position position="238"/>
    </location>
    <ligand>
        <name>ATP</name>
        <dbReference type="ChEBI" id="CHEBI:30616"/>
    </ligand>
</feature>
<name>SYY_XANP2</name>
<dbReference type="EC" id="6.1.1.1" evidence="1"/>
<dbReference type="EMBL" id="CP000781">
    <property type="protein sequence ID" value="ABS69695.1"/>
    <property type="molecule type" value="Genomic_DNA"/>
</dbReference>
<dbReference type="SMR" id="A7INU9"/>
<dbReference type="STRING" id="78245.Xaut_4474"/>
<dbReference type="KEGG" id="xau:Xaut_4474"/>
<dbReference type="eggNOG" id="COG0162">
    <property type="taxonomic scope" value="Bacteria"/>
</dbReference>
<dbReference type="HOGENOM" id="CLU_024003_0_3_5"/>
<dbReference type="OrthoDB" id="9804243at2"/>
<dbReference type="PhylomeDB" id="A7INU9"/>
<dbReference type="Proteomes" id="UP000002417">
    <property type="component" value="Chromosome"/>
</dbReference>
<dbReference type="GO" id="GO:0005829">
    <property type="term" value="C:cytosol"/>
    <property type="evidence" value="ECO:0007669"/>
    <property type="project" value="TreeGrafter"/>
</dbReference>
<dbReference type="GO" id="GO:0005524">
    <property type="term" value="F:ATP binding"/>
    <property type="evidence" value="ECO:0007669"/>
    <property type="project" value="UniProtKB-UniRule"/>
</dbReference>
<dbReference type="GO" id="GO:0003723">
    <property type="term" value="F:RNA binding"/>
    <property type="evidence" value="ECO:0007669"/>
    <property type="project" value="UniProtKB-KW"/>
</dbReference>
<dbReference type="GO" id="GO:0004831">
    <property type="term" value="F:tyrosine-tRNA ligase activity"/>
    <property type="evidence" value="ECO:0007669"/>
    <property type="project" value="UniProtKB-UniRule"/>
</dbReference>
<dbReference type="GO" id="GO:0006437">
    <property type="term" value="P:tyrosyl-tRNA aminoacylation"/>
    <property type="evidence" value="ECO:0007669"/>
    <property type="project" value="UniProtKB-UniRule"/>
</dbReference>
<dbReference type="CDD" id="cd00165">
    <property type="entry name" value="S4"/>
    <property type="match status" value="1"/>
</dbReference>
<dbReference type="CDD" id="cd00805">
    <property type="entry name" value="TyrRS_core"/>
    <property type="match status" value="1"/>
</dbReference>
<dbReference type="FunFam" id="1.10.240.10:FF:000001">
    <property type="entry name" value="Tyrosine--tRNA ligase"/>
    <property type="match status" value="1"/>
</dbReference>
<dbReference type="Gene3D" id="3.40.50.620">
    <property type="entry name" value="HUPs"/>
    <property type="match status" value="1"/>
</dbReference>
<dbReference type="Gene3D" id="3.10.290.10">
    <property type="entry name" value="RNA-binding S4 domain"/>
    <property type="match status" value="1"/>
</dbReference>
<dbReference type="Gene3D" id="1.10.240.10">
    <property type="entry name" value="Tyrosyl-Transfer RNA Synthetase"/>
    <property type="match status" value="1"/>
</dbReference>
<dbReference type="HAMAP" id="MF_02006">
    <property type="entry name" value="Tyr_tRNA_synth_type1"/>
    <property type="match status" value="1"/>
</dbReference>
<dbReference type="InterPro" id="IPR002305">
    <property type="entry name" value="aa-tRNA-synth_Ic"/>
</dbReference>
<dbReference type="InterPro" id="IPR014729">
    <property type="entry name" value="Rossmann-like_a/b/a_fold"/>
</dbReference>
<dbReference type="InterPro" id="IPR036986">
    <property type="entry name" value="S4_RNA-bd_sf"/>
</dbReference>
<dbReference type="InterPro" id="IPR054608">
    <property type="entry name" value="SYY-like_C"/>
</dbReference>
<dbReference type="InterPro" id="IPR002307">
    <property type="entry name" value="Tyr-tRNA-ligase"/>
</dbReference>
<dbReference type="InterPro" id="IPR024088">
    <property type="entry name" value="Tyr-tRNA-ligase_bac-type"/>
</dbReference>
<dbReference type="InterPro" id="IPR024107">
    <property type="entry name" value="Tyr-tRNA-ligase_bac_1"/>
</dbReference>
<dbReference type="NCBIfam" id="TIGR00234">
    <property type="entry name" value="tyrS"/>
    <property type="match status" value="1"/>
</dbReference>
<dbReference type="PANTHER" id="PTHR11766:SF0">
    <property type="entry name" value="TYROSINE--TRNA LIGASE, MITOCHONDRIAL"/>
    <property type="match status" value="1"/>
</dbReference>
<dbReference type="PANTHER" id="PTHR11766">
    <property type="entry name" value="TYROSYL-TRNA SYNTHETASE"/>
    <property type="match status" value="1"/>
</dbReference>
<dbReference type="Pfam" id="PF22421">
    <property type="entry name" value="SYY_C-terminal"/>
    <property type="match status" value="1"/>
</dbReference>
<dbReference type="Pfam" id="PF00579">
    <property type="entry name" value="tRNA-synt_1b"/>
    <property type="match status" value="1"/>
</dbReference>
<dbReference type="PRINTS" id="PR01040">
    <property type="entry name" value="TRNASYNTHTYR"/>
</dbReference>
<dbReference type="SUPFAM" id="SSF55174">
    <property type="entry name" value="Alpha-L RNA-binding motif"/>
    <property type="match status" value="1"/>
</dbReference>
<dbReference type="SUPFAM" id="SSF52374">
    <property type="entry name" value="Nucleotidylyl transferase"/>
    <property type="match status" value="1"/>
</dbReference>
<dbReference type="PROSITE" id="PS50889">
    <property type="entry name" value="S4"/>
    <property type="match status" value="1"/>
</dbReference>
<sequence>MTTQTFRSDFLRTLHERGYIHQCSDLERLDAKAAEGPITAYIGFDATASSLHAGHLLSIMMLRTLQRTGHNPIALMGGGTTKIGDPSGKDEARKMLTDQQIEDNIASIRKVFARFLDFGAGAKMENNASWLDELKYIPLLREVGPHFTINRMLTFDSVKLRLEREQPLTFLEFNYMILQAYDFVELNARHGCILQMGGSDQWGNIVNGMELGRRMRGADLFALTTPLLTTSSGAKMGKTAGGAVWLDADLLSPYEYWQYWRNAGDADVERFLKLFTELPLDEIARLAALEGQEINHAKEVLATEATALLHGREAAEKAKETSRATFADGALAVDLPTVEVPRATLEAGLPVAKAFVDAGLVASTSEARRQIKGGGLKVNDVTVTDEKAVIDLGALTPEGVVKLSLGKKKHVLLKPV</sequence>
<proteinExistence type="inferred from homology"/>
<keyword id="KW-0030">Aminoacyl-tRNA synthetase</keyword>
<keyword id="KW-0067">ATP-binding</keyword>
<keyword id="KW-0963">Cytoplasm</keyword>
<keyword id="KW-0436">Ligase</keyword>
<keyword id="KW-0547">Nucleotide-binding</keyword>
<keyword id="KW-0648">Protein biosynthesis</keyword>
<keyword id="KW-1185">Reference proteome</keyword>
<keyword id="KW-0694">RNA-binding</keyword>
<comment type="function">
    <text evidence="1">Catalyzes the attachment of tyrosine to tRNA(Tyr) in a two-step reaction: tyrosine is first activated by ATP to form Tyr-AMP and then transferred to the acceptor end of tRNA(Tyr).</text>
</comment>
<comment type="catalytic activity">
    <reaction evidence="1">
        <text>tRNA(Tyr) + L-tyrosine + ATP = L-tyrosyl-tRNA(Tyr) + AMP + diphosphate + H(+)</text>
        <dbReference type="Rhea" id="RHEA:10220"/>
        <dbReference type="Rhea" id="RHEA-COMP:9706"/>
        <dbReference type="Rhea" id="RHEA-COMP:9707"/>
        <dbReference type="ChEBI" id="CHEBI:15378"/>
        <dbReference type="ChEBI" id="CHEBI:30616"/>
        <dbReference type="ChEBI" id="CHEBI:33019"/>
        <dbReference type="ChEBI" id="CHEBI:58315"/>
        <dbReference type="ChEBI" id="CHEBI:78442"/>
        <dbReference type="ChEBI" id="CHEBI:78536"/>
        <dbReference type="ChEBI" id="CHEBI:456215"/>
        <dbReference type="EC" id="6.1.1.1"/>
    </reaction>
</comment>
<comment type="subunit">
    <text evidence="1">Homodimer.</text>
</comment>
<comment type="subcellular location">
    <subcellularLocation>
        <location evidence="1">Cytoplasm</location>
    </subcellularLocation>
</comment>
<comment type="similarity">
    <text evidence="1">Belongs to the class-I aminoacyl-tRNA synthetase family. TyrS type 1 subfamily.</text>
</comment>
<reference key="1">
    <citation type="submission" date="2007-07" db="EMBL/GenBank/DDBJ databases">
        <title>Complete sequence of chromosome of Xanthobacter autotrophicus Py2.</title>
        <authorList>
            <consortium name="US DOE Joint Genome Institute"/>
            <person name="Copeland A."/>
            <person name="Lucas S."/>
            <person name="Lapidus A."/>
            <person name="Barry K."/>
            <person name="Glavina del Rio T."/>
            <person name="Hammon N."/>
            <person name="Israni S."/>
            <person name="Dalin E."/>
            <person name="Tice H."/>
            <person name="Pitluck S."/>
            <person name="Sims D."/>
            <person name="Brettin T."/>
            <person name="Bruce D."/>
            <person name="Detter J.C."/>
            <person name="Han C."/>
            <person name="Tapia R."/>
            <person name="Brainard J."/>
            <person name="Schmutz J."/>
            <person name="Larimer F."/>
            <person name="Land M."/>
            <person name="Hauser L."/>
            <person name="Kyrpides N."/>
            <person name="Kim E."/>
            <person name="Ensigns S.A."/>
            <person name="Richardson P."/>
        </authorList>
    </citation>
    <scope>NUCLEOTIDE SEQUENCE [LARGE SCALE GENOMIC DNA]</scope>
    <source>
        <strain>ATCC BAA-1158 / Py2</strain>
    </source>
</reference>
<evidence type="ECO:0000255" key="1">
    <source>
        <dbReference type="HAMAP-Rule" id="MF_02006"/>
    </source>
</evidence>